<proteinExistence type="inferred from homology"/>
<reference key="1">
    <citation type="submission" date="2008-10" db="EMBL/GenBank/DDBJ databases">
        <title>Genome sequence of Clostridium botulinum A2 Kyoto.</title>
        <authorList>
            <person name="Shrivastava S."/>
            <person name="Brinkac L.M."/>
            <person name="Brown J.L."/>
            <person name="Bruce D."/>
            <person name="Detter C.C."/>
            <person name="Johnson E.A."/>
            <person name="Munk C.A."/>
            <person name="Smith L.A."/>
            <person name="Smith T.J."/>
            <person name="Sutton G."/>
            <person name="Brettin T.S."/>
        </authorList>
    </citation>
    <scope>NUCLEOTIDE SEQUENCE [LARGE SCALE GENOMIC DNA]</scope>
    <source>
        <strain>Kyoto / Type A2</strain>
    </source>
</reference>
<organism>
    <name type="scientific">Clostridium botulinum (strain Kyoto / Type A2)</name>
    <dbReference type="NCBI Taxonomy" id="536232"/>
    <lineage>
        <taxon>Bacteria</taxon>
        <taxon>Bacillati</taxon>
        <taxon>Bacillota</taxon>
        <taxon>Clostridia</taxon>
        <taxon>Eubacteriales</taxon>
        <taxon>Clostridiaceae</taxon>
        <taxon>Clostridium</taxon>
    </lineage>
</organism>
<gene>
    <name evidence="1" type="primary">folE</name>
    <name type="ordered locus">CLM_1797</name>
</gene>
<comment type="catalytic activity">
    <reaction evidence="1">
        <text>GTP + H2O = 7,8-dihydroneopterin 3'-triphosphate + formate + H(+)</text>
        <dbReference type="Rhea" id="RHEA:17473"/>
        <dbReference type="ChEBI" id="CHEBI:15377"/>
        <dbReference type="ChEBI" id="CHEBI:15378"/>
        <dbReference type="ChEBI" id="CHEBI:15740"/>
        <dbReference type="ChEBI" id="CHEBI:37565"/>
        <dbReference type="ChEBI" id="CHEBI:58462"/>
        <dbReference type="EC" id="3.5.4.16"/>
    </reaction>
</comment>
<comment type="pathway">
    <text evidence="1">Cofactor biosynthesis; 7,8-dihydroneopterin triphosphate biosynthesis; 7,8-dihydroneopterin triphosphate from GTP: step 1/1.</text>
</comment>
<comment type="subunit">
    <text evidence="1">Homomer.</text>
</comment>
<comment type="similarity">
    <text evidence="1">Belongs to the GTP cyclohydrolase I family.</text>
</comment>
<evidence type="ECO:0000255" key="1">
    <source>
        <dbReference type="HAMAP-Rule" id="MF_00223"/>
    </source>
</evidence>
<feature type="chain" id="PRO_1000124913" description="GTP cyclohydrolase 1">
    <location>
        <begin position="1"/>
        <end position="196"/>
    </location>
</feature>
<feature type="binding site" evidence="1">
    <location>
        <position position="86"/>
    </location>
    <ligand>
        <name>Zn(2+)</name>
        <dbReference type="ChEBI" id="CHEBI:29105"/>
    </ligand>
</feature>
<feature type="binding site" evidence="1">
    <location>
        <position position="89"/>
    </location>
    <ligand>
        <name>Zn(2+)</name>
        <dbReference type="ChEBI" id="CHEBI:29105"/>
    </ligand>
</feature>
<feature type="binding site" evidence="1">
    <location>
        <position position="158"/>
    </location>
    <ligand>
        <name>Zn(2+)</name>
        <dbReference type="ChEBI" id="CHEBI:29105"/>
    </ligand>
</feature>
<protein>
    <recommendedName>
        <fullName evidence="1">GTP cyclohydrolase 1</fullName>
        <ecNumber evidence="1">3.5.4.16</ecNumber>
    </recommendedName>
    <alternativeName>
        <fullName evidence="1">GTP cyclohydrolase I</fullName>
        <shortName evidence="1">GTP-CH-I</shortName>
    </alternativeName>
</protein>
<keyword id="KW-0342">GTP-binding</keyword>
<keyword id="KW-0378">Hydrolase</keyword>
<keyword id="KW-0479">Metal-binding</keyword>
<keyword id="KW-0547">Nucleotide-binding</keyword>
<keyword id="KW-0554">One-carbon metabolism</keyword>
<keyword id="KW-0862">Zinc</keyword>
<sequence length="196" mass="22241">MAIDVKAIEEHIRGILIALGDDPEREGLKNTPKRVAKMYEEVFKGMCYSNDEIAEMFNVTFEDDLCINDNENDMVFMKEIEIFSHCEHHLALMYNMKVAIAYIPKKKIIGLSKIARIADMVGRRLQLQERIGSDIAEILQKITGSEDVAVIIEGEHGCMTTRGIKKPGTKTITTTLRGRFNTDPIVSNKLMMLYTK</sequence>
<dbReference type="EC" id="3.5.4.16" evidence="1"/>
<dbReference type="EMBL" id="CP001581">
    <property type="protein sequence ID" value="ACO86930.1"/>
    <property type="molecule type" value="Genomic_DNA"/>
</dbReference>
<dbReference type="RefSeq" id="WP_003358544.1">
    <property type="nucleotide sequence ID" value="NC_012563.1"/>
</dbReference>
<dbReference type="SMR" id="C1FN26"/>
<dbReference type="KEGG" id="cby:CLM_1797"/>
<dbReference type="eggNOG" id="COG0302">
    <property type="taxonomic scope" value="Bacteria"/>
</dbReference>
<dbReference type="HOGENOM" id="CLU_049768_3_2_9"/>
<dbReference type="UniPathway" id="UPA00848">
    <property type="reaction ID" value="UER00151"/>
</dbReference>
<dbReference type="Proteomes" id="UP000001374">
    <property type="component" value="Chromosome"/>
</dbReference>
<dbReference type="GO" id="GO:0005737">
    <property type="term" value="C:cytoplasm"/>
    <property type="evidence" value="ECO:0007669"/>
    <property type="project" value="TreeGrafter"/>
</dbReference>
<dbReference type="GO" id="GO:0005525">
    <property type="term" value="F:GTP binding"/>
    <property type="evidence" value="ECO:0007669"/>
    <property type="project" value="UniProtKB-KW"/>
</dbReference>
<dbReference type="GO" id="GO:0003934">
    <property type="term" value="F:GTP cyclohydrolase I activity"/>
    <property type="evidence" value="ECO:0007669"/>
    <property type="project" value="UniProtKB-UniRule"/>
</dbReference>
<dbReference type="GO" id="GO:0008270">
    <property type="term" value="F:zinc ion binding"/>
    <property type="evidence" value="ECO:0007669"/>
    <property type="project" value="UniProtKB-UniRule"/>
</dbReference>
<dbReference type="GO" id="GO:0006730">
    <property type="term" value="P:one-carbon metabolic process"/>
    <property type="evidence" value="ECO:0007669"/>
    <property type="project" value="UniProtKB-UniRule"/>
</dbReference>
<dbReference type="GO" id="GO:0006729">
    <property type="term" value="P:tetrahydrobiopterin biosynthetic process"/>
    <property type="evidence" value="ECO:0007669"/>
    <property type="project" value="TreeGrafter"/>
</dbReference>
<dbReference type="GO" id="GO:0046654">
    <property type="term" value="P:tetrahydrofolate biosynthetic process"/>
    <property type="evidence" value="ECO:0007669"/>
    <property type="project" value="UniProtKB-UniRule"/>
</dbReference>
<dbReference type="FunFam" id="1.10.286.10:FF:000007">
    <property type="entry name" value="GTP cyclohydrolase 1"/>
    <property type="match status" value="1"/>
</dbReference>
<dbReference type="FunFam" id="3.30.1130.10:FF:000001">
    <property type="entry name" value="GTP cyclohydrolase 1"/>
    <property type="match status" value="1"/>
</dbReference>
<dbReference type="Gene3D" id="1.10.286.10">
    <property type="match status" value="1"/>
</dbReference>
<dbReference type="Gene3D" id="3.30.1130.10">
    <property type="match status" value="1"/>
</dbReference>
<dbReference type="HAMAP" id="MF_00223">
    <property type="entry name" value="FolE"/>
    <property type="match status" value="1"/>
</dbReference>
<dbReference type="InterPro" id="IPR043133">
    <property type="entry name" value="GTP-CH-I_C/QueF"/>
</dbReference>
<dbReference type="InterPro" id="IPR043134">
    <property type="entry name" value="GTP-CH-I_N"/>
</dbReference>
<dbReference type="InterPro" id="IPR001474">
    <property type="entry name" value="GTP_CycHdrlase_I"/>
</dbReference>
<dbReference type="InterPro" id="IPR018234">
    <property type="entry name" value="GTP_CycHdrlase_I_CS"/>
</dbReference>
<dbReference type="InterPro" id="IPR020602">
    <property type="entry name" value="GTP_CycHdrlase_I_dom"/>
</dbReference>
<dbReference type="NCBIfam" id="TIGR00063">
    <property type="entry name" value="folE"/>
    <property type="match status" value="1"/>
</dbReference>
<dbReference type="NCBIfam" id="NF006825">
    <property type="entry name" value="PRK09347.1-2"/>
    <property type="match status" value="1"/>
</dbReference>
<dbReference type="NCBIfam" id="NF006826">
    <property type="entry name" value="PRK09347.1-3"/>
    <property type="match status" value="1"/>
</dbReference>
<dbReference type="PANTHER" id="PTHR11109:SF7">
    <property type="entry name" value="GTP CYCLOHYDROLASE 1"/>
    <property type="match status" value="1"/>
</dbReference>
<dbReference type="PANTHER" id="PTHR11109">
    <property type="entry name" value="GTP CYCLOHYDROLASE I"/>
    <property type="match status" value="1"/>
</dbReference>
<dbReference type="Pfam" id="PF01227">
    <property type="entry name" value="GTP_cyclohydroI"/>
    <property type="match status" value="1"/>
</dbReference>
<dbReference type="SUPFAM" id="SSF55620">
    <property type="entry name" value="Tetrahydrobiopterin biosynthesis enzymes-like"/>
    <property type="match status" value="1"/>
</dbReference>
<dbReference type="PROSITE" id="PS00859">
    <property type="entry name" value="GTP_CYCLOHYDROL_1_1"/>
    <property type="match status" value="1"/>
</dbReference>
<accession>C1FN26</accession>
<name>GCH1_CLOBJ</name>